<organism>
    <name type="scientific">Pseudomonas aeruginosa (strain LESB58)</name>
    <dbReference type="NCBI Taxonomy" id="557722"/>
    <lineage>
        <taxon>Bacteria</taxon>
        <taxon>Pseudomonadati</taxon>
        <taxon>Pseudomonadota</taxon>
        <taxon>Gammaproteobacteria</taxon>
        <taxon>Pseudomonadales</taxon>
        <taxon>Pseudomonadaceae</taxon>
        <taxon>Pseudomonas</taxon>
    </lineage>
</organism>
<name>GATA_PSEA8</name>
<dbReference type="EC" id="6.3.5.7" evidence="1"/>
<dbReference type="EMBL" id="FM209186">
    <property type="protein sequence ID" value="CAW29617.1"/>
    <property type="molecule type" value="Genomic_DNA"/>
</dbReference>
<dbReference type="RefSeq" id="WP_003094399.1">
    <property type="nucleotide sequence ID" value="NC_011770.1"/>
</dbReference>
<dbReference type="SMR" id="B7V023"/>
<dbReference type="KEGG" id="pag:PLES_48631"/>
<dbReference type="HOGENOM" id="CLU_009600_0_3_6"/>
<dbReference type="GO" id="GO:0030956">
    <property type="term" value="C:glutamyl-tRNA(Gln) amidotransferase complex"/>
    <property type="evidence" value="ECO:0007669"/>
    <property type="project" value="InterPro"/>
</dbReference>
<dbReference type="GO" id="GO:0005524">
    <property type="term" value="F:ATP binding"/>
    <property type="evidence" value="ECO:0007669"/>
    <property type="project" value="UniProtKB-KW"/>
</dbReference>
<dbReference type="GO" id="GO:0050567">
    <property type="term" value="F:glutaminyl-tRNA synthase (glutamine-hydrolyzing) activity"/>
    <property type="evidence" value="ECO:0007669"/>
    <property type="project" value="UniProtKB-UniRule"/>
</dbReference>
<dbReference type="GO" id="GO:0006412">
    <property type="term" value="P:translation"/>
    <property type="evidence" value="ECO:0007669"/>
    <property type="project" value="UniProtKB-UniRule"/>
</dbReference>
<dbReference type="Gene3D" id="3.90.1300.10">
    <property type="entry name" value="Amidase signature (AS) domain"/>
    <property type="match status" value="1"/>
</dbReference>
<dbReference type="HAMAP" id="MF_00120">
    <property type="entry name" value="GatA"/>
    <property type="match status" value="1"/>
</dbReference>
<dbReference type="InterPro" id="IPR000120">
    <property type="entry name" value="Amidase"/>
</dbReference>
<dbReference type="InterPro" id="IPR020556">
    <property type="entry name" value="Amidase_CS"/>
</dbReference>
<dbReference type="InterPro" id="IPR023631">
    <property type="entry name" value="Amidase_dom"/>
</dbReference>
<dbReference type="InterPro" id="IPR036928">
    <property type="entry name" value="AS_sf"/>
</dbReference>
<dbReference type="InterPro" id="IPR004412">
    <property type="entry name" value="GatA"/>
</dbReference>
<dbReference type="NCBIfam" id="TIGR00132">
    <property type="entry name" value="gatA"/>
    <property type="match status" value="1"/>
</dbReference>
<dbReference type="PANTHER" id="PTHR11895:SF151">
    <property type="entry name" value="GLUTAMYL-TRNA(GLN) AMIDOTRANSFERASE SUBUNIT A"/>
    <property type="match status" value="1"/>
</dbReference>
<dbReference type="PANTHER" id="PTHR11895">
    <property type="entry name" value="TRANSAMIDASE"/>
    <property type="match status" value="1"/>
</dbReference>
<dbReference type="Pfam" id="PF01425">
    <property type="entry name" value="Amidase"/>
    <property type="match status" value="1"/>
</dbReference>
<dbReference type="SUPFAM" id="SSF75304">
    <property type="entry name" value="Amidase signature (AS) enzymes"/>
    <property type="match status" value="1"/>
</dbReference>
<dbReference type="PROSITE" id="PS00571">
    <property type="entry name" value="AMIDASES"/>
    <property type="match status" value="1"/>
</dbReference>
<gene>
    <name evidence="1" type="primary">gatA</name>
    <name type="ordered locus">PLES_48631</name>
</gene>
<proteinExistence type="inferred from homology"/>
<accession>B7V023</accession>
<keyword id="KW-0067">ATP-binding</keyword>
<keyword id="KW-0436">Ligase</keyword>
<keyword id="KW-0547">Nucleotide-binding</keyword>
<keyword id="KW-0648">Protein biosynthesis</keyword>
<sequence>MLHQLTLAEIARALADKQFSAEELTRTLLGRIRQLDPQLNSFISITDDLAIAQAKAADERRANGENGALLGAPIAHKDLFCTQGVRTSCGSKMLDNFVSPYDATVVEKLAAAGAVTLGKLNMDEFAMGSSNQSSHYGAVNNPWSLDRVPGGSSGGSAAAVAARLLPAATGTDTGGSIRQPAALTNLTGIKPTYGRVSRWGMIAYASSLDQGGPLARTAEDCALMLGVMAGFDPKDSTSVEQPVDDYLAALQKPLSGLRIGLPREYFGAGLDSRIADAVLAVVEELKTLGATVKDISLPNMQHAIPAYYVIAPAEASSNLSRFDGVRYGYRCDAPQNLEDLYKRSRAEGFGSEVKNRIMVGTYALSAGYYDAYYLQAQKIRRLIKNDFVSAFAEVDVILGPTTPNPAWKIGEKNDDPVSQYLEDIYTITANLAGLPGLSMPAGFVDGLPVGVQLLAPYFQEGRLLNVAHQYQQVSDWHTRTPAGF</sequence>
<evidence type="ECO:0000255" key="1">
    <source>
        <dbReference type="HAMAP-Rule" id="MF_00120"/>
    </source>
</evidence>
<comment type="function">
    <text evidence="1">Allows the formation of correctly charged Gln-tRNA(Gln) through the transamidation of misacylated Glu-tRNA(Gln) in organisms which lack glutaminyl-tRNA synthetase. The reaction takes place in the presence of glutamine and ATP through an activated gamma-phospho-Glu-tRNA(Gln).</text>
</comment>
<comment type="catalytic activity">
    <reaction evidence="1">
        <text>L-glutamyl-tRNA(Gln) + L-glutamine + ATP + H2O = L-glutaminyl-tRNA(Gln) + L-glutamate + ADP + phosphate + H(+)</text>
        <dbReference type="Rhea" id="RHEA:17521"/>
        <dbReference type="Rhea" id="RHEA-COMP:9681"/>
        <dbReference type="Rhea" id="RHEA-COMP:9684"/>
        <dbReference type="ChEBI" id="CHEBI:15377"/>
        <dbReference type="ChEBI" id="CHEBI:15378"/>
        <dbReference type="ChEBI" id="CHEBI:29985"/>
        <dbReference type="ChEBI" id="CHEBI:30616"/>
        <dbReference type="ChEBI" id="CHEBI:43474"/>
        <dbReference type="ChEBI" id="CHEBI:58359"/>
        <dbReference type="ChEBI" id="CHEBI:78520"/>
        <dbReference type="ChEBI" id="CHEBI:78521"/>
        <dbReference type="ChEBI" id="CHEBI:456216"/>
        <dbReference type="EC" id="6.3.5.7"/>
    </reaction>
</comment>
<comment type="subunit">
    <text evidence="1">Heterotrimer of A, B and C subunits.</text>
</comment>
<comment type="similarity">
    <text evidence="1">Belongs to the amidase family. GatA subfamily.</text>
</comment>
<feature type="chain" id="PRO_1000117610" description="Glutamyl-tRNA(Gln) amidotransferase subunit A">
    <location>
        <begin position="1"/>
        <end position="484"/>
    </location>
</feature>
<feature type="active site" description="Charge relay system" evidence="1">
    <location>
        <position position="77"/>
    </location>
</feature>
<feature type="active site" description="Charge relay system" evidence="1">
    <location>
        <position position="152"/>
    </location>
</feature>
<feature type="active site" description="Acyl-ester intermediate" evidence="1">
    <location>
        <position position="176"/>
    </location>
</feature>
<protein>
    <recommendedName>
        <fullName evidence="1">Glutamyl-tRNA(Gln) amidotransferase subunit A</fullName>
        <shortName evidence="1">Glu-ADT subunit A</shortName>
        <ecNumber evidence="1">6.3.5.7</ecNumber>
    </recommendedName>
</protein>
<reference key="1">
    <citation type="journal article" date="2009" name="Genome Res.">
        <title>Newly introduced genomic prophage islands are critical determinants of in vivo competitiveness in the Liverpool epidemic strain of Pseudomonas aeruginosa.</title>
        <authorList>
            <person name="Winstanley C."/>
            <person name="Langille M.G.I."/>
            <person name="Fothergill J.L."/>
            <person name="Kukavica-Ibrulj I."/>
            <person name="Paradis-Bleau C."/>
            <person name="Sanschagrin F."/>
            <person name="Thomson N.R."/>
            <person name="Winsor G.L."/>
            <person name="Quail M.A."/>
            <person name="Lennard N."/>
            <person name="Bignell A."/>
            <person name="Clarke L."/>
            <person name="Seeger K."/>
            <person name="Saunders D."/>
            <person name="Harris D."/>
            <person name="Parkhill J."/>
            <person name="Hancock R.E.W."/>
            <person name="Brinkman F.S.L."/>
            <person name="Levesque R.C."/>
        </authorList>
    </citation>
    <scope>NUCLEOTIDE SEQUENCE [LARGE SCALE GENOMIC DNA]</scope>
    <source>
        <strain>LESB58</strain>
    </source>
</reference>